<feature type="chain" id="PRO_0000094999" description="UPF0291 protein SMU_447">
    <location>
        <begin position="1"/>
        <end position="84"/>
    </location>
</feature>
<feature type="region of interest" description="Disordered" evidence="2">
    <location>
        <begin position="57"/>
        <end position="84"/>
    </location>
</feature>
<keyword id="KW-0963">Cytoplasm</keyword>
<keyword id="KW-1185">Reference proteome</keyword>
<organism>
    <name type="scientific">Streptococcus mutans serotype c (strain ATCC 700610 / UA159)</name>
    <dbReference type="NCBI Taxonomy" id="210007"/>
    <lineage>
        <taxon>Bacteria</taxon>
        <taxon>Bacillati</taxon>
        <taxon>Bacillota</taxon>
        <taxon>Bacilli</taxon>
        <taxon>Lactobacillales</taxon>
        <taxon>Streptococcaceae</taxon>
        <taxon>Streptococcus</taxon>
    </lineage>
</organism>
<evidence type="ECO:0000255" key="1">
    <source>
        <dbReference type="HAMAP-Rule" id="MF_01103"/>
    </source>
</evidence>
<evidence type="ECO:0000256" key="2">
    <source>
        <dbReference type="SAM" id="MobiDB-lite"/>
    </source>
</evidence>
<protein>
    <recommendedName>
        <fullName evidence="1">UPF0291 protein SMU_447</fullName>
    </recommendedName>
</protein>
<name>Y447_STRMU</name>
<proteinExistence type="inferred from homology"/>
<accession>Q8DVN2</accession>
<sequence length="84" mass="9879">MEQTKIDRINELARKKKTEGLTGAEKLEQERLREEYIEGYRRSIRHHIEGLKIVDEEGNDITPAKLKEIQRQKGIHGRKPEDNS</sequence>
<gene>
    <name type="ordered locus">SMU_447</name>
</gene>
<comment type="subcellular location">
    <subcellularLocation>
        <location evidence="1">Cytoplasm</location>
    </subcellularLocation>
</comment>
<comment type="similarity">
    <text evidence="1">Belongs to the UPF0291 family.</text>
</comment>
<dbReference type="EMBL" id="AE014133">
    <property type="protein sequence ID" value="AAN58197.1"/>
    <property type="molecule type" value="Genomic_DNA"/>
</dbReference>
<dbReference type="RefSeq" id="NP_720891.1">
    <property type="nucleotide sequence ID" value="NC_004350.2"/>
</dbReference>
<dbReference type="RefSeq" id="WP_002262083.1">
    <property type="nucleotide sequence ID" value="NC_004350.2"/>
</dbReference>
<dbReference type="SMR" id="Q8DVN2"/>
<dbReference type="STRING" id="210007.SMU_447"/>
<dbReference type="KEGG" id="smu:SMU_447"/>
<dbReference type="PATRIC" id="fig|210007.7.peg.393"/>
<dbReference type="eggNOG" id="COG4224">
    <property type="taxonomic scope" value="Bacteria"/>
</dbReference>
<dbReference type="HOGENOM" id="CLU_173137_0_2_9"/>
<dbReference type="OrthoDB" id="390105at2"/>
<dbReference type="PhylomeDB" id="Q8DVN2"/>
<dbReference type="Proteomes" id="UP000002512">
    <property type="component" value="Chromosome"/>
</dbReference>
<dbReference type="GO" id="GO:0005737">
    <property type="term" value="C:cytoplasm"/>
    <property type="evidence" value="ECO:0007669"/>
    <property type="project" value="UniProtKB-SubCell"/>
</dbReference>
<dbReference type="Gene3D" id="1.10.287.540">
    <property type="entry name" value="Helix hairpin bin"/>
    <property type="match status" value="1"/>
</dbReference>
<dbReference type="HAMAP" id="MF_01103">
    <property type="entry name" value="UPF0291"/>
    <property type="match status" value="1"/>
</dbReference>
<dbReference type="InterPro" id="IPR009242">
    <property type="entry name" value="DUF896"/>
</dbReference>
<dbReference type="NCBIfam" id="NF002711">
    <property type="entry name" value="PRK02539.1"/>
    <property type="match status" value="1"/>
</dbReference>
<dbReference type="PANTHER" id="PTHR37300">
    <property type="entry name" value="UPF0291 PROTEIN CBO2609/CLC_2481"/>
    <property type="match status" value="1"/>
</dbReference>
<dbReference type="PANTHER" id="PTHR37300:SF1">
    <property type="entry name" value="UPF0291 PROTEIN YNZC"/>
    <property type="match status" value="1"/>
</dbReference>
<dbReference type="Pfam" id="PF05979">
    <property type="entry name" value="DUF896"/>
    <property type="match status" value="1"/>
</dbReference>
<dbReference type="SUPFAM" id="SSF158221">
    <property type="entry name" value="YnzC-like"/>
    <property type="match status" value="1"/>
</dbReference>
<reference key="1">
    <citation type="journal article" date="2002" name="Proc. Natl. Acad. Sci. U.S.A.">
        <title>Genome sequence of Streptococcus mutans UA159, a cariogenic dental pathogen.</title>
        <authorList>
            <person name="Ajdic D.J."/>
            <person name="McShan W.M."/>
            <person name="McLaughlin R.E."/>
            <person name="Savic G."/>
            <person name="Chang J."/>
            <person name="Carson M.B."/>
            <person name="Primeaux C."/>
            <person name="Tian R."/>
            <person name="Kenton S."/>
            <person name="Jia H.G."/>
            <person name="Lin S.P."/>
            <person name="Qian Y."/>
            <person name="Li S."/>
            <person name="Zhu H."/>
            <person name="Najar F.Z."/>
            <person name="Lai H."/>
            <person name="White J."/>
            <person name="Roe B.A."/>
            <person name="Ferretti J.J."/>
        </authorList>
    </citation>
    <scope>NUCLEOTIDE SEQUENCE [LARGE SCALE GENOMIC DNA]</scope>
    <source>
        <strain>ATCC 700610 / UA159</strain>
    </source>
</reference>